<proteinExistence type="evidence at transcript level"/>
<accession>Q17833</accession>
<dbReference type="EC" id="2.7.10.1" evidence="6"/>
<dbReference type="EMBL" id="BX284602">
    <property type="protein sequence ID" value="CAA91146.3"/>
    <property type="molecule type" value="Genomic_DNA"/>
</dbReference>
<dbReference type="RefSeq" id="NP_496130.2">
    <property type="nucleotide sequence ID" value="NM_063729.5"/>
</dbReference>
<dbReference type="SMR" id="Q17833"/>
<dbReference type="FunCoup" id="Q17833">
    <property type="interactions" value="18"/>
</dbReference>
<dbReference type="STRING" id="6239.C08H9.5.1"/>
<dbReference type="PaxDb" id="6239-C08H9.5"/>
<dbReference type="EnsemblMetazoa" id="C08H9.5.1">
    <property type="protein sequence ID" value="C08H9.5.1"/>
    <property type="gene ID" value="WBGene00003862"/>
</dbReference>
<dbReference type="GeneID" id="191737"/>
<dbReference type="KEGG" id="cel:CELE_C08H9.5"/>
<dbReference type="AGR" id="WB:WBGene00003862"/>
<dbReference type="CTD" id="191737"/>
<dbReference type="WormBase" id="C08H9.5">
    <property type="protein sequence ID" value="CE45789"/>
    <property type="gene ID" value="WBGene00003862"/>
    <property type="gene designation" value="old-1"/>
</dbReference>
<dbReference type="eggNOG" id="KOG0200">
    <property type="taxonomic scope" value="Eukaryota"/>
</dbReference>
<dbReference type="GeneTree" id="ENSGT00940000166715"/>
<dbReference type="HOGENOM" id="CLU_000288_7_40_1"/>
<dbReference type="InParanoid" id="Q17833"/>
<dbReference type="OMA" id="PINEKIM"/>
<dbReference type="OrthoDB" id="5912975at2759"/>
<dbReference type="PhylomeDB" id="Q17833"/>
<dbReference type="PRO" id="PR:Q17833"/>
<dbReference type="Proteomes" id="UP000001940">
    <property type="component" value="Chromosome II"/>
</dbReference>
<dbReference type="Bgee" id="WBGene00003862">
    <property type="expression patterns" value="Expressed in larva and 1 other cell type or tissue"/>
</dbReference>
<dbReference type="GO" id="GO:0005886">
    <property type="term" value="C:plasma membrane"/>
    <property type="evidence" value="ECO:0000318"/>
    <property type="project" value="GO_Central"/>
</dbReference>
<dbReference type="GO" id="GO:0043235">
    <property type="term" value="C:receptor complex"/>
    <property type="evidence" value="ECO:0000318"/>
    <property type="project" value="GO_Central"/>
</dbReference>
<dbReference type="GO" id="GO:0005524">
    <property type="term" value="F:ATP binding"/>
    <property type="evidence" value="ECO:0007669"/>
    <property type="project" value="UniProtKB-KW"/>
</dbReference>
<dbReference type="GO" id="GO:0004714">
    <property type="term" value="F:transmembrane receptor protein tyrosine kinase activity"/>
    <property type="evidence" value="ECO:0000318"/>
    <property type="project" value="GO_Central"/>
</dbReference>
<dbReference type="GO" id="GO:0007169">
    <property type="term" value="P:cell surface receptor protein tyrosine kinase signaling pathway"/>
    <property type="evidence" value="ECO:0000318"/>
    <property type="project" value="GO_Central"/>
</dbReference>
<dbReference type="CDD" id="cd00192">
    <property type="entry name" value="PTKc"/>
    <property type="match status" value="1"/>
</dbReference>
<dbReference type="FunFam" id="3.30.200.20:FF:000586">
    <property type="entry name" value="Receptor protein-tyrosine kinase"/>
    <property type="match status" value="1"/>
</dbReference>
<dbReference type="FunFam" id="1.10.510.10:FF:001122">
    <property type="entry name" value="Receptor-like tyrosine-protein kinase kin-15"/>
    <property type="match status" value="1"/>
</dbReference>
<dbReference type="Gene3D" id="3.30.200.20">
    <property type="entry name" value="Phosphorylase Kinase, domain 1"/>
    <property type="match status" value="1"/>
</dbReference>
<dbReference type="Gene3D" id="1.10.510.10">
    <property type="entry name" value="Transferase(Phosphotransferase) domain 1"/>
    <property type="match status" value="1"/>
</dbReference>
<dbReference type="InterPro" id="IPR011009">
    <property type="entry name" value="Kinase-like_dom_sf"/>
</dbReference>
<dbReference type="InterPro" id="IPR000719">
    <property type="entry name" value="Prot_kinase_dom"/>
</dbReference>
<dbReference type="InterPro" id="IPR017441">
    <property type="entry name" value="Protein_kinase_ATP_BS"/>
</dbReference>
<dbReference type="InterPro" id="IPR050122">
    <property type="entry name" value="RTK"/>
</dbReference>
<dbReference type="InterPro" id="IPR001245">
    <property type="entry name" value="Ser-Thr/Tyr_kinase_cat_dom"/>
</dbReference>
<dbReference type="InterPro" id="IPR008266">
    <property type="entry name" value="Tyr_kinase_AS"/>
</dbReference>
<dbReference type="InterPro" id="IPR020635">
    <property type="entry name" value="Tyr_kinase_cat_dom"/>
</dbReference>
<dbReference type="PANTHER" id="PTHR24416:SF503">
    <property type="entry name" value="PROTEIN KINASE DOMAIN-CONTAINING PROTEIN-RELATED"/>
    <property type="match status" value="1"/>
</dbReference>
<dbReference type="PANTHER" id="PTHR24416">
    <property type="entry name" value="TYROSINE-PROTEIN KINASE RECEPTOR"/>
    <property type="match status" value="1"/>
</dbReference>
<dbReference type="Pfam" id="PF07714">
    <property type="entry name" value="PK_Tyr_Ser-Thr"/>
    <property type="match status" value="1"/>
</dbReference>
<dbReference type="PRINTS" id="PR00109">
    <property type="entry name" value="TYRKINASE"/>
</dbReference>
<dbReference type="SMART" id="SM00219">
    <property type="entry name" value="TyrKc"/>
    <property type="match status" value="1"/>
</dbReference>
<dbReference type="SUPFAM" id="SSF56112">
    <property type="entry name" value="Protein kinase-like (PK-like)"/>
    <property type="match status" value="1"/>
</dbReference>
<dbReference type="PROSITE" id="PS00107">
    <property type="entry name" value="PROTEIN_KINASE_ATP"/>
    <property type="match status" value="1"/>
</dbReference>
<dbReference type="PROSITE" id="PS50011">
    <property type="entry name" value="PROTEIN_KINASE_DOM"/>
    <property type="match status" value="1"/>
</dbReference>
<dbReference type="PROSITE" id="PS00109">
    <property type="entry name" value="PROTEIN_KINASE_TYR"/>
    <property type="match status" value="1"/>
</dbReference>
<comment type="function">
    <text evidence="4 5">Receptor tyrosine kinase which plays a role in promoting longevity and resistance to stresses including UV irradiation and high temperatures, probably downstream of daf-16.</text>
</comment>
<comment type="catalytic activity">
    <reaction evidence="6">
        <text>L-tyrosyl-[protein] + ATP = O-phospho-L-tyrosyl-[protein] + ADP + H(+)</text>
        <dbReference type="Rhea" id="RHEA:10596"/>
        <dbReference type="Rhea" id="RHEA-COMP:10136"/>
        <dbReference type="Rhea" id="RHEA-COMP:20101"/>
        <dbReference type="ChEBI" id="CHEBI:15378"/>
        <dbReference type="ChEBI" id="CHEBI:30616"/>
        <dbReference type="ChEBI" id="CHEBI:46858"/>
        <dbReference type="ChEBI" id="CHEBI:61978"/>
        <dbReference type="ChEBI" id="CHEBI:456216"/>
        <dbReference type="EC" id="2.7.10.1"/>
    </reaction>
</comment>
<comment type="subcellular location">
    <subcellularLocation>
        <location evidence="6">Cell membrane</location>
        <topology evidence="6">Single-pass type I membrane protein</topology>
    </subcellularLocation>
</comment>
<comment type="induction">
    <text evidence="4">By UV irradiation, high temperatures, starvation and old age.</text>
</comment>
<comment type="disruption phenotype">
    <text evidence="4">Increased life span and resistance to UV irradiation and high temperatures.</text>
</comment>
<comment type="similarity">
    <text evidence="2">Belongs to the protein kinase superfamily. Tyr protein kinase family.</text>
</comment>
<name>OLD1_CAEEL</name>
<reference evidence="8" key="1">
    <citation type="journal article" date="1998" name="Science">
        <title>Genome sequence of the nematode C. elegans: a platform for investigating biology.</title>
        <authorList>
            <consortium name="The C. elegans sequencing consortium"/>
        </authorList>
    </citation>
    <scope>NUCLEOTIDE SEQUENCE [LARGE SCALE GENOMIC DNA]</scope>
    <source>
        <strain evidence="8">Bristol N2</strain>
    </source>
</reference>
<reference evidence="6" key="2">
    <citation type="journal article" date="1998" name="Curr. Biol.">
        <title>Life extension and stress resistance in Caenorhabditis elegans modulated by the tkr-1 gene.</title>
        <authorList>
            <person name="Murakami S."/>
            <person name="Johnson T.E."/>
        </authorList>
    </citation>
    <scope>FUNCTION</scope>
</reference>
<reference evidence="6" key="3">
    <citation type="journal article" date="2001" name="Curr. Biol.">
        <title>The OLD-1 positive regulator of longevity and stress resistance is under DAF-16 regulation in Caenorhabditis elegans.</title>
        <authorList>
            <person name="Murakami S."/>
            <person name="Johnson T.E."/>
        </authorList>
    </citation>
    <scope>FUNCTION</scope>
    <scope>INDUCTION</scope>
    <scope>DISRUPTION PHENOTYPE</scope>
</reference>
<sequence length="502" mass="58385">MKGTLIFVVFYSSYGFAHCNTILRSSSLSRNFEDSLRRIPRSTDKDETGFEDSNVQEVIFILLYCLFVALAILICGLIIFYNSRKRELRANRSRGDEYLLEPTSADHKRRNSSNIVPPEPTPYPITSGESDLRQTPSRLSNVECPPELELAPINEKIMYLHYYAEVEINEEDLDISKGRPLGSGEFGIIRKGFLRSKNSKNEEKESRLEVAVKLPLNEYNQIQQELIYDELKVMCAVGKHPNILALVGGITFGERKMIVSEFVENGDLLSFLRDNRIYFTNDQWTLETEQDSLSLVDLLSFAFQIAKGMEYLIHVPCVHRDLALRNVLIKKNRIIRIADFGLARRHKNKDYYKTQSVDTPLPIHWMAPESIDKLLFTQKSDVWSYGVCLYELFSLGKSPYENVIKYDQRDFYWKYVLSYLNEGKRLAQPAHADAEIYNVMKLCWDLDMNSRTTFLDCIEFFEKELKTTSNEYFLDLTRKLRSETNNQLRLSNWLSDEKHCDS</sequence>
<gene>
    <name evidence="9" type="primary">old-1</name>
    <name evidence="9" type="synonym">tkr-1</name>
    <name evidence="9" type="ORF">C08H9.5</name>
</gene>
<evidence type="ECO:0000255" key="1"/>
<evidence type="ECO:0000255" key="2">
    <source>
        <dbReference type="PROSITE-ProRule" id="PRU00159"/>
    </source>
</evidence>
<evidence type="ECO:0000256" key="3">
    <source>
        <dbReference type="SAM" id="MobiDB-lite"/>
    </source>
</evidence>
<evidence type="ECO:0000269" key="4">
    <source>
    </source>
</evidence>
<evidence type="ECO:0000269" key="5">
    <source>
    </source>
</evidence>
<evidence type="ECO:0000305" key="6"/>
<evidence type="ECO:0000305" key="7">
    <source>
    </source>
</evidence>
<evidence type="ECO:0000312" key="8">
    <source>
        <dbReference type="Proteomes" id="UP000001940"/>
    </source>
</evidence>
<evidence type="ECO:0000312" key="9">
    <source>
        <dbReference type="WormBase" id="C08H9.5"/>
    </source>
</evidence>
<organism evidence="8">
    <name type="scientific">Caenorhabditis elegans</name>
    <dbReference type="NCBI Taxonomy" id="6239"/>
    <lineage>
        <taxon>Eukaryota</taxon>
        <taxon>Metazoa</taxon>
        <taxon>Ecdysozoa</taxon>
        <taxon>Nematoda</taxon>
        <taxon>Chromadorea</taxon>
        <taxon>Rhabditida</taxon>
        <taxon>Rhabditina</taxon>
        <taxon>Rhabditomorpha</taxon>
        <taxon>Rhabditoidea</taxon>
        <taxon>Rhabditidae</taxon>
        <taxon>Peloderinae</taxon>
        <taxon>Caenorhabditis</taxon>
    </lineage>
</organism>
<feature type="signal peptide" evidence="1">
    <location>
        <begin position="1"/>
        <end position="19"/>
    </location>
</feature>
<feature type="chain" id="PRO_0000434506" description="Tyrosine-protein kinase receptor old-1" evidence="6">
    <location>
        <begin position="20"/>
        <end position="502"/>
    </location>
</feature>
<feature type="topological domain" description="Extracellular" evidence="1">
    <location>
        <begin position="20"/>
        <end position="58"/>
    </location>
</feature>
<feature type="transmembrane region" description="Helical" evidence="1">
    <location>
        <begin position="59"/>
        <end position="79"/>
    </location>
</feature>
<feature type="topological domain" description="Cytoplasmic" evidence="1">
    <location>
        <begin position="80"/>
        <end position="502"/>
    </location>
</feature>
<feature type="domain" description="Protein kinase" evidence="2">
    <location>
        <begin position="175"/>
        <end position="473"/>
    </location>
</feature>
<feature type="region of interest" description="Disordered" evidence="3">
    <location>
        <begin position="99"/>
        <end position="140"/>
    </location>
</feature>
<feature type="compositionally biased region" description="Polar residues" evidence="3">
    <location>
        <begin position="127"/>
        <end position="140"/>
    </location>
</feature>
<feature type="active site" description="Proton acceptor" evidence="2">
    <location>
        <position position="321"/>
    </location>
</feature>
<feature type="binding site" evidence="2">
    <location>
        <begin position="181"/>
        <end position="189"/>
    </location>
    <ligand>
        <name>ATP</name>
        <dbReference type="ChEBI" id="CHEBI:30616"/>
    </ligand>
</feature>
<feature type="binding site" evidence="2">
    <location>
        <position position="213"/>
    </location>
    <ligand>
        <name>ATP</name>
        <dbReference type="ChEBI" id="CHEBI:30616"/>
    </ligand>
</feature>
<protein>
    <recommendedName>
        <fullName evidence="7">Tyrosine-protein kinase receptor old-1</fullName>
        <ecNumber evidence="6">2.7.10.1</ecNumber>
    </recommendedName>
    <alternativeName>
        <fullName evidence="9">Overexpression longevity determinant protein 1</fullName>
    </alternativeName>
</protein>
<keyword id="KW-0067">ATP-binding</keyword>
<keyword id="KW-1003">Cell membrane</keyword>
<keyword id="KW-0418">Kinase</keyword>
<keyword id="KW-0472">Membrane</keyword>
<keyword id="KW-0547">Nucleotide-binding</keyword>
<keyword id="KW-1185">Reference proteome</keyword>
<keyword id="KW-0732">Signal</keyword>
<keyword id="KW-0346">Stress response</keyword>
<keyword id="KW-0808">Transferase</keyword>
<keyword id="KW-0812">Transmembrane</keyword>
<keyword id="KW-1133">Transmembrane helix</keyword>
<keyword id="KW-0829">Tyrosine-protein kinase</keyword>